<sequence>MKPAARRRARECAVQALYSWQLSQNDIADVEYQFLAEQDVKDVDVLYFRELLAGVATNTAYLDGLMKPYLSRLLEELGQVEKAVLRIALYELSKRSDVPYKVAINEAIELAKSFGAEDSHKFVNGVLDKAAPVIRPNKK</sequence>
<protein>
    <recommendedName>
        <fullName evidence="1">Transcription antitermination protein NusB</fullName>
    </recommendedName>
    <alternativeName>
        <fullName evidence="1">Antitermination factor NusB</fullName>
    </alternativeName>
</protein>
<organism>
    <name type="scientific">Escherichia coli O157:H7</name>
    <dbReference type="NCBI Taxonomy" id="83334"/>
    <lineage>
        <taxon>Bacteria</taxon>
        <taxon>Pseudomonadati</taxon>
        <taxon>Pseudomonadota</taxon>
        <taxon>Gammaproteobacteria</taxon>
        <taxon>Enterobacterales</taxon>
        <taxon>Enterobacteriaceae</taxon>
        <taxon>Escherichia</taxon>
    </lineage>
</organism>
<evidence type="ECO:0000255" key="1">
    <source>
        <dbReference type="HAMAP-Rule" id="MF_00073"/>
    </source>
</evidence>
<evidence type="ECO:0000305" key="2"/>
<keyword id="KW-1185">Reference proteome</keyword>
<keyword id="KW-0694">RNA-binding</keyword>
<keyword id="KW-0804">Transcription</keyword>
<keyword id="KW-0889">Transcription antitermination</keyword>
<keyword id="KW-0805">Transcription regulation</keyword>
<name>NUSB_ECO57</name>
<dbReference type="EMBL" id="AE005174">
    <property type="protein sequence ID" value="AAG54765.1"/>
    <property type="molecule type" value="Genomic_DNA"/>
</dbReference>
<dbReference type="EMBL" id="BA000007">
    <property type="protein sequence ID" value="BAB33892.1"/>
    <property type="molecule type" value="Genomic_DNA"/>
</dbReference>
<dbReference type="PIR" id="A85538">
    <property type="entry name" value="A85538"/>
</dbReference>
<dbReference type="PIR" id="E90687">
    <property type="entry name" value="E90687"/>
</dbReference>
<dbReference type="RefSeq" id="NP_308496.1">
    <property type="nucleotide sequence ID" value="NC_002695.1"/>
</dbReference>
<dbReference type="RefSeq" id="WP_000801125.1">
    <property type="nucleotide sequence ID" value="NZ_VOAI01000005.1"/>
</dbReference>
<dbReference type="SMR" id="P0A782"/>
<dbReference type="STRING" id="155864.Z0518"/>
<dbReference type="GeneID" id="914571"/>
<dbReference type="GeneID" id="93777044"/>
<dbReference type="KEGG" id="ece:Z0518"/>
<dbReference type="KEGG" id="ecs:ECs_0469"/>
<dbReference type="PATRIC" id="fig|386585.9.peg.569"/>
<dbReference type="eggNOG" id="COG0781">
    <property type="taxonomic scope" value="Bacteria"/>
</dbReference>
<dbReference type="HOGENOM" id="CLU_087843_4_1_6"/>
<dbReference type="OMA" id="DRMPVVD"/>
<dbReference type="Proteomes" id="UP000000558">
    <property type="component" value="Chromosome"/>
</dbReference>
<dbReference type="Proteomes" id="UP000002519">
    <property type="component" value="Chromosome"/>
</dbReference>
<dbReference type="GO" id="GO:0005829">
    <property type="term" value="C:cytosol"/>
    <property type="evidence" value="ECO:0007669"/>
    <property type="project" value="TreeGrafter"/>
</dbReference>
<dbReference type="GO" id="GO:0003723">
    <property type="term" value="F:RNA binding"/>
    <property type="evidence" value="ECO:0007669"/>
    <property type="project" value="UniProtKB-UniRule"/>
</dbReference>
<dbReference type="GO" id="GO:0006353">
    <property type="term" value="P:DNA-templated transcription termination"/>
    <property type="evidence" value="ECO:0007669"/>
    <property type="project" value="UniProtKB-UniRule"/>
</dbReference>
<dbReference type="GO" id="GO:0031564">
    <property type="term" value="P:transcription antitermination"/>
    <property type="evidence" value="ECO:0007669"/>
    <property type="project" value="UniProtKB-KW"/>
</dbReference>
<dbReference type="CDD" id="cd00619">
    <property type="entry name" value="Terminator_NusB"/>
    <property type="match status" value="1"/>
</dbReference>
<dbReference type="FunFam" id="1.10.940.10:FF:000001">
    <property type="entry name" value="Transcription antitermination factor NusB"/>
    <property type="match status" value="1"/>
</dbReference>
<dbReference type="Gene3D" id="1.10.940.10">
    <property type="entry name" value="NusB-like"/>
    <property type="match status" value="1"/>
</dbReference>
<dbReference type="HAMAP" id="MF_00073">
    <property type="entry name" value="NusB"/>
    <property type="match status" value="1"/>
</dbReference>
<dbReference type="InterPro" id="IPR035926">
    <property type="entry name" value="NusB-like_sf"/>
</dbReference>
<dbReference type="InterPro" id="IPR011605">
    <property type="entry name" value="NusB_fam"/>
</dbReference>
<dbReference type="InterPro" id="IPR006027">
    <property type="entry name" value="NusB_RsmB_TIM44"/>
</dbReference>
<dbReference type="NCBIfam" id="TIGR01951">
    <property type="entry name" value="nusB"/>
    <property type="match status" value="1"/>
</dbReference>
<dbReference type="PANTHER" id="PTHR11078:SF3">
    <property type="entry name" value="ANTITERMINATION NUSB DOMAIN-CONTAINING PROTEIN"/>
    <property type="match status" value="1"/>
</dbReference>
<dbReference type="PANTHER" id="PTHR11078">
    <property type="entry name" value="N UTILIZATION SUBSTANCE PROTEIN B-RELATED"/>
    <property type="match status" value="1"/>
</dbReference>
<dbReference type="Pfam" id="PF01029">
    <property type="entry name" value="NusB"/>
    <property type="match status" value="1"/>
</dbReference>
<dbReference type="SUPFAM" id="SSF48013">
    <property type="entry name" value="NusB-like"/>
    <property type="match status" value="1"/>
</dbReference>
<feature type="chain" id="PRO_0000176537" description="Transcription antitermination protein NusB">
    <location>
        <begin position="1"/>
        <end position="139"/>
    </location>
</feature>
<reference key="1">
    <citation type="journal article" date="2001" name="Nature">
        <title>Genome sequence of enterohaemorrhagic Escherichia coli O157:H7.</title>
        <authorList>
            <person name="Perna N.T."/>
            <person name="Plunkett G. III"/>
            <person name="Burland V."/>
            <person name="Mau B."/>
            <person name="Glasner J.D."/>
            <person name="Rose D.J."/>
            <person name="Mayhew G.F."/>
            <person name="Evans P.S."/>
            <person name="Gregor J."/>
            <person name="Kirkpatrick H.A."/>
            <person name="Posfai G."/>
            <person name="Hackett J."/>
            <person name="Klink S."/>
            <person name="Boutin A."/>
            <person name="Shao Y."/>
            <person name="Miller L."/>
            <person name="Grotbeck E.J."/>
            <person name="Davis N.W."/>
            <person name="Lim A."/>
            <person name="Dimalanta E.T."/>
            <person name="Potamousis K."/>
            <person name="Apodaca J."/>
            <person name="Anantharaman T.S."/>
            <person name="Lin J."/>
            <person name="Yen G."/>
            <person name="Schwartz D.C."/>
            <person name="Welch R.A."/>
            <person name="Blattner F.R."/>
        </authorList>
    </citation>
    <scope>NUCLEOTIDE SEQUENCE [LARGE SCALE GENOMIC DNA]</scope>
    <source>
        <strain>O157:H7 / EDL933 / ATCC 700927 / EHEC</strain>
    </source>
</reference>
<reference key="2">
    <citation type="journal article" date="2001" name="DNA Res.">
        <title>Complete genome sequence of enterohemorrhagic Escherichia coli O157:H7 and genomic comparison with a laboratory strain K-12.</title>
        <authorList>
            <person name="Hayashi T."/>
            <person name="Makino K."/>
            <person name="Ohnishi M."/>
            <person name="Kurokawa K."/>
            <person name="Ishii K."/>
            <person name="Yokoyama K."/>
            <person name="Han C.-G."/>
            <person name="Ohtsubo E."/>
            <person name="Nakayama K."/>
            <person name="Murata T."/>
            <person name="Tanaka M."/>
            <person name="Tobe T."/>
            <person name="Iida T."/>
            <person name="Takami H."/>
            <person name="Honda T."/>
            <person name="Sasakawa C."/>
            <person name="Ogasawara N."/>
            <person name="Yasunaga T."/>
            <person name="Kuhara S."/>
            <person name="Shiba T."/>
            <person name="Hattori M."/>
            <person name="Shinagawa H."/>
        </authorList>
    </citation>
    <scope>NUCLEOTIDE SEQUENCE [LARGE SCALE GENOMIC DNA]</scope>
    <source>
        <strain>O157:H7 / Sakai / RIMD 0509952 / EHEC</strain>
    </source>
</reference>
<gene>
    <name evidence="1" type="primary">nusB</name>
    <name type="ordered locus">Z0518</name>
    <name type="ordered locus">ECs0469</name>
</gene>
<accession>P0A782</accession>
<accession>P04381</accession>
<proteinExistence type="inferred from homology"/>
<comment type="function">
    <text evidence="1">Involved in transcription antitermination. Required for transcription of ribosomal RNA (rRNA) genes. Binds specifically to the boxA antiterminator sequence of the ribosomal RNA (rrn) operons.</text>
</comment>
<comment type="similarity">
    <text evidence="1 2">Belongs to the NusB family.</text>
</comment>